<protein>
    <recommendedName>
        <fullName evidence="1">Photosystem I P700 chlorophyll a apoprotein A2</fullName>
        <ecNumber evidence="1">1.97.1.12</ecNumber>
    </recommendedName>
    <alternativeName>
        <fullName evidence="1">PSI-B</fullName>
    </alternativeName>
    <alternativeName>
        <fullName evidence="1">PsaB</fullName>
    </alternativeName>
</protein>
<keyword id="KW-0004">4Fe-4S</keyword>
<keyword id="KW-0148">Chlorophyll</keyword>
<keyword id="KW-0150">Chloroplast</keyword>
<keyword id="KW-0157">Chromophore</keyword>
<keyword id="KW-0249">Electron transport</keyword>
<keyword id="KW-0408">Iron</keyword>
<keyword id="KW-0411">Iron-sulfur</keyword>
<keyword id="KW-0460">Magnesium</keyword>
<keyword id="KW-0472">Membrane</keyword>
<keyword id="KW-0479">Metal-binding</keyword>
<keyword id="KW-0560">Oxidoreductase</keyword>
<keyword id="KW-0602">Photosynthesis</keyword>
<keyword id="KW-0603">Photosystem I</keyword>
<keyword id="KW-0934">Plastid</keyword>
<keyword id="KW-0793">Thylakoid</keyword>
<keyword id="KW-0812">Transmembrane</keyword>
<keyword id="KW-1133">Transmembrane helix</keyword>
<keyword id="KW-0813">Transport</keyword>
<organism>
    <name type="scientific">Tetradesmus obliquus</name>
    <name type="common">Green alga</name>
    <name type="synonym">Acutodesmus obliquus</name>
    <dbReference type="NCBI Taxonomy" id="3088"/>
    <lineage>
        <taxon>Eukaryota</taxon>
        <taxon>Viridiplantae</taxon>
        <taxon>Chlorophyta</taxon>
        <taxon>core chlorophytes</taxon>
        <taxon>Chlorophyceae</taxon>
        <taxon>CS clade</taxon>
        <taxon>Sphaeropleales</taxon>
        <taxon>Scenedesmaceae</taxon>
        <taxon>Tetradesmus</taxon>
    </lineage>
</organism>
<accession>Q1KVS5</accession>
<proteinExistence type="inferred from homology"/>
<name>PSAB_TETOB</name>
<feature type="chain" id="PRO_0000277131" description="Photosystem I P700 chlorophyll a apoprotein A2">
    <location>
        <begin position="1"/>
        <end position="735"/>
    </location>
</feature>
<feature type="transmembrane region" description="Helical; Name=I" evidence="1">
    <location>
        <begin position="47"/>
        <end position="70"/>
    </location>
</feature>
<feature type="transmembrane region" description="Helical; Name=II" evidence="1">
    <location>
        <begin position="136"/>
        <end position="159"/>
    </location>
</feature>
<feature type="transmembrane region" description="Helical; Name=III" evidence="1">
    <location>
        <begin position="176"/>
        <end position="200"/>
    </location>
</feature>
<feature type="transmembrane region" description="Helical; Name=IV" evidence="1">
    <location>
        <begin position="274"/>
        <end position="292"/>
    </location>
</feature>
<feature type="transmembrane region" description="Helical; Name=V" evidence="1">
    <location>
        <begin position="331"/>
        <end position="354"/>
    </location>
</feature>
<feature type="transmembrane region" description="Helical; Name=VI" evidence="1">
    <location>
        <begin position="370"/>
        <end position="396"/>
    </location>
</feature>
<feature type="transmembrane region" description="Helical; Name=VII" evidence="1">
    <location>
        <begin position="418"/>
        <end position="440"/>
    </location>
</feature>
<feature type="transmembrane region" description="Helical; Name=VIII" evidence="1">
    <location>
        <begin position="518"/>
        <end position="536"/>
    </location>
</feature>
<feature type="transmembrane region" description="Helical; Name=IX" evidence="1">
    <location>
        <begin position="576"/>
        <end position="597"/>
    </location>
</feature>
<feature type="transmembrane region" description="Helical; Name=X" evidence="1">
    <location>
        <begin position="644"/>
        <end position="666"/>
    </location>
</feature>
<feature type="transmembrane region" description="Helical; Name=XI" evidence="1">
    <location>
        <begin position="708"/>
        <end position="728"/>
    </location>
</feature>
<feature type="binding site" evidence="1">
    <location>
        <position position="560"/>
    </location>
    <ligand>
        <name>[4Fe-4S] cluster</name>
        <dbReference type="ChEBI" id="CHEBI:49883"/>
        <note>ligand shared between dimeric partners</note>
    </ligand>
</feature>
<feature type="binding site" evidence="1">
    <location>
        <position position="569"/>
    </location>
    <ligand>
        <name>[4Fe-4S] cluster</name>
        <dbReference type="ChEBI" id="CHEBI:49883"/>
        <note>ligand shared between dimeric partners</note>
    </ligand>
</feature>
<feature type="binding site" description="axial binding residue" evidence="1">
    <location>
        <position position="655"/>
    </location>
    <ligand>
        <name>chlorophyll a</name>
        <dbReference type="ChEBI" id="CHEBI:58416"/>
        <label>B1</label>
    </ligand>
    <ligandPart>
        <name>Mg</name>
        <dbReference type="ChEBI" id="CHEBI:25107"/>
    </ligandPart>
</feature>
<feature type="binding site" description="axial binding residue" evidence="1">
    <location>
        <position position="663"/>
    </location>
    <ligand>
        <name>chlorophyll a</name>
        <dbReference type="ChEBI" id="CHEBI:58416"/>
        <label>B3</label>
    </ligand>
    <ligandPart>
        <name>Mg</name>
        <dbReference type="ChEBI" id="CHEBI:25107"/>
    </ligandPart>
</feature>
<feature type="binding site" evidence="1">
    <location>
        <position position="671"/>
    </location>
    <ligand>
        <name>chlorophyll a</name>
        <dbReference type="ChEBI" id="CHEBI:58416"/>
        <label>B3</label>
    </ligand>
</feature>
<feature type="binding site" evidence="1">
    <location>
        <position position="672"/>
    </location>
    <ligand>
        <name>phylloquinone</name>
        <dbReference type="ChEBI" id="CHEBI:18067"/>
        <label>B</label>
    </ligand>
</feature>
<comment type="function">
    <text evidence="1">PsaA and PsaB bind P700, the primary electron donor of photosystem I (PSI), as well as the electron acceptors A0, A1 and FX. PSI is a plastocyanin/cytochrome c6-ferredoxin oxidoreductase, converting photonic excitation into a charge separation, which transfers an electron from the donor P700 chlorophyll pair to the spectroscopically characterized acceptors A0, A1, FX, FA and FB in turn. Oxidized P700 is reduced on the lumenal side of the thylakoid membrane by plastocyanin or cytochrome c6.</text>
</comment>
<comment type="catalytic activity">
    <reaction evidence="1">
        <text>reduced [plastocyanin] + hnu + oxidized [2Fe-2S]-[ferredoxin] = oxidized [plastocyanin] + reduced [2Fe-2S]-[ferredoxin]</text>
        <dbReference type="Rhea" id="RHEA:30407"/>
        <dbReference type="Rhea" id="RHEA-COMP:10000"/>
        <dbReference type="Rhea" id="RHEA-COMP:10001"/>
        <dbReference type="Rhea" id="RHEA-COMP:10039"/>
        <dbReference type="Rhea" id="RHEA-COMP:10040"/>
        <dbReference type="ChEBI" id="CHEBI:29036"/>
        <dbReference type="ChEBI" id="CHEBI:30212"/>
        <dbReference type="ChEBI" id="CHEBI:33737"/>
        <dbReference type="ChEBI" id="CHEBI:33738"/>
        <dbReference type="ChEBI" id="CHEBI:49552"/>
        <dbReference type="EC" id="1.97.1.12"/>
    </reaction>
</comment>
<comment type="cofactor">
    <text evidence="1">P700 is a chlorophyll a/chlorophyll a' dimer, A0 is one or more chlorophyll a, A1 is one or both phylloquinones and FX is a shared 4Fe-4S iron-sulfur center.</text>
</comment>
<comment type="subunit">
    <text evidence="1">The PsaA/B heterodimer binds the P700 chlorophyll special pair and subsequent electron acceptors. PSI consists of a core antenna complex that captures photons, and an electron transfer chain that converts photonic excitation into a charge separation. The eukaryotic PSI reaction center is composed of at least 11 subunits.</text>
</comment>
<comment type="subcellular location">
    <subcellularLocation>
        <location>Plastid</location>
        <location>Chloroplast thylakoid membrane</location>
        <topology>Multi-pass membrane protein</topology>
    </subcellularLocation>
</comment>
<comment type="similarity">
    <text evidence="1">Belongs to the PsaA/PsaB family.</text>
</comment>
<dbReference type="EC" id="1.97.1.12" evidence="1"/>
<dbReference type="EMBL" id="DQ396875">
    <property type="protein sequence ID" value="ABD48282.1"/>
    <property type="molecule type" value="Genomic_DNA"/>
</dbReference>
<dbReference type="RefSeq" id="YP_635999.1">
    <property type="nucleotide sequence ID" value="NC_008101.1"/>
</dbReference>
<dbReference type="SMR" id="Q1KVS5"/>
<dbReference type="GeneID" id="4099791"/>
<dbReference type="GO" id="GO:0009535">
    <property type="term" value="C:chloroplast thylakoid membrane"/>
    <property type="evidence" value="ECO:0007669"/>
    <property type="project" value="UniProtKB-SubCell"/>
</dbReference>
<dbReference type="GO" id="GO:0009522">
    <property type="term" value="C:photosystem I"/>
    <property type="evidence" value="ECO:0007669"/>
    <property type="project" value="UniProtKB-KW"/>
</dbReference>
<dbReference type="GO" id="GO:0051539">
    <property type="term" value="F:4 iron, 4 sulfur cluster binding"/>
    <property type="evidence" value="ECO:0007669"/>
    <property type="project" value="UniProtKB-KW"/>
</dbReference>
<dbReference type="GO" id="GO:0016168">
    <property type="term" value="F:chlorophyll binding"/>
    <property type="evidence" value="ECO:0007669"/>
    <property type="project" value="UniProtKB-KW"/>
</dbReference>
<dbReference type="GO" id="GO:0009055">
    <property type="term" value="F:electron transfer activity"/>
    <property type="evidence" value="ECO:0007669"/>
    <property type="project" value="UniProtKB-UniRule"/>
</dbReference>
<dbReference type="GO" id="GO:0000287">
    <property type="term" value="F:magnesium ion binding"/>
    <property type="evidence" value="ECO:0007669"/>
    <property type="project" value="UniProtKB-UniRule"/>
</dbReference>
<dbReference type="GO" id="GO:0016491">
    <property type="term" value="F:oxidoreductase activity"/>
    <property type="evidence" value="ECO:0007669"/>
    <property type="project" value="UniProtKB-KW"/>
</dbReference>
<dbReference type="GO" id="GO:0015979">
    <property type="term" value="P:photosynthesis"/>
    <property type="evidence" value="ECO:0007669"/>
    <property type="project" value="UniProtKB-UniRule"/>
</dbReference>
<dbReference type="FunFam" id="1.20.1130.10:FF:000001">
    <property type="entry name" value="Photosystem I P700 chlorophyll a apoprotein A2"/>
    <property type="match status" value="1"/>
</dbReference>
<dbReference type="Gene3D" id="1.20.1130.10">
    <property type="entry name" value="Photosystem I PsaA/PsaB"/>
    <property type="match status" value="1"/>
</dbReference>
<dbReference type="HAMAP" id="MF_00482">
    <property type="entry name" value="PSI_PsaB"/>
    <property type="match status" value="1"/>
</dbReference>
<dbReference type="InterPro" id="IPR001280">
    <property type="entry name" value="PSI_PsaA/B"/>
</dbReference>
<dbReference type="InterPro" id="IPR020586">
    <property type="entry name" value="PSI_PsaA/B_CS"/>
</dbReference>
<dbReference type="InterPro" id="IPR036408">
    <property type="entry name" value="PSI_PsaA/B_sf"/>
</dbReference>
<dbReference type="InterPro" id="IPR006244">
    <property type="entry name" value="PSI_PsaB"/>
</dbReference>
<dbReference type="NCBIfam" id="TIGR01336">
    <property type="entry name" value="psaB"/>
    <property type="match status" value="1"/>
</dbReference>
<dbReference type="PANTHER" id="PTHR30128">
    <property type="entry name" value="OUTER MEMBRANE PROTEIN, OMPA-RELATED"/>
    <property type="match status" value="1"/>
</dbReference>
<dbReference type="PANTHER" id="PTHR30128:SF19">
    <property type="entry name" value="PHOTOSYSTEM I P700 CHLOROPHYLL A APOPROTEIN A1-RELATED"/>
    <property type="match status" value="1"/>
</dbReference>
<dbReference type="Pfam" id="PF00223">
    <property type="entry name" value="PsaA_PsaB"/>
    <property type="match status" value="1"/>
</dbReference>
<dbReference type="PIRSF" id="PIRSF002905">
    <property type="entry name" value="PSI_A"/>
    <property type="match status" value="1"/>
</dbReference>
<dbReference type="PRINTS" id="PR00257">
    <property type="entry name" value="PHOTSYSPSAAB"/>
</dbReference>
<dbReference type="SUPFAM" id="SSF81558">
    <property type="entry name" value="Photosystem I subunits PsaA/PsaB"/>
    <property type="match status" value="1"/>
</dbReference>
<dbReference type="PROSITE" id="PS00419">
    <property type="entry name" value="PHOTOSYSTEM_I_PSAAB"/>
    <property type="match status" value="1"/>
</dbReference>
<evidence type="ECO:0000255" key="1">
    <source>
        <dbReference type="HAMAP-Rule" id="MF_00482"/>
    </source>
</evidence>
<geneLocation type="chloroplast"/>
<sequence>MATKLFPKFSQGLAQDPTTRRIWFGLAVAHDFESHDGMTEENLYQKIFASHFGQLAIIFLWTSGNLFHVAWQGNFEQWGADPIHVRPIAHAIWDPHFGQPAVEAFTRGGASGPVNISTSGLYQWWYTIGMRTNQDLYVGSVFLALVSAIFLFAGWLHLQPSFQPSLSWFKDAESRLNHHLSGLFGVSSLAWTGHLVHVAIPESRGKHVGWDNFLTQLPHPQGLTPFWTGNWAAYAQNPDSASHIFGTSDGAGEAILTFLGGFHPQTQSLWLTDMAHHHLAIAVLFIVAGHMYRTNFGIGHRMSAILDAHVAPSGRLGAGHKGLFETVNNSLHFQLGLALASVGTICSLVAQHMYSLPPYAFLANDFTTQAALYTHHQYIAGFIMCGAFAHGAIFWIRDYDPEQNKGNVLSRMLDHKEAIISHLSWVSLFLGFHTLGLYVHNDVMLAFGTPEKQILIEPVFAQWIQAAHGKAFYGFDLLLSSSSSSASSASQTLWLPGWLDAINNNQNSLFLTIGPGDFLVHHAIALGLHTTTLILVKGALDARGSKLMPDKKDFGYSFPCDGPGRGGTCDISAYDAFYLAVFWMLNTIGWVTFYWHWKHLTLWQGNVSQFDESSTYLMGWLRDYLWLNSSQLINGYNPFGMNSLSVWAWMFLAGHLVYATGFMFLISWRGYWQELIETLVWAHEKTPLANLVYWKDKPVALSIVQARLVGLAHFSVGYVFTYAAFVIASTSGKFG</sequence>
<reference key="1">
    <citation type="journal article" date="2006" name="BMC Evol. Biol.">
        <title>The complete chloroplast genome sequence of the chlorophycean green alga Scenedesmus obliquus reveals a compact gene organization and a biased distribution of genes on the two DNA strands.</title>
        <authorList>
            <person name="de Cambiaire J.-C."/>
            <person name="Otis C."/>
            <person name="Lemieux C."/>
            <person name="Turmel M."/>
        </authorList>
    </citation>
    <scope>NUCLEOTIDE SEQUENCE [LARGE SCALE GENOMIC DNA]</scope>
    <source>
        <strain>UTEX 393</strain>
    </source>
</reference>
<gene>
    <name evidence="1" type="primary">psaB</name>
</gene>